<comment type="function">
    <text evidence="1">May play a role in signal transduction pathways that involve calcium as a second messenger.</text>
</comment>
<comment type="catalytic activity">
    <reaction evidence="7">
        <text>L-seryl-[protein] + ATP = O-phospho-L-seryl-[protein] + ADP + H(+)</text>
        <dbReference type="Rhea" id="RHEA:17989"/>
        <dbReference type="Rhea" id="RHEA-COMP:9863"/>
        <dbReference type="Rhea" id="RHEA-COMP:11604"/>
        <dbReference type="ChEBI" id="CHEBI:15378"/>
        <dbReference type="ChEBI" id="CHEBI:29999"/>
        <dbReference type="ChEBI" id="CHEBI:30616"/>
        <dbReference type="ChEBI" id="CHEBI:83421"/>
        <dbReference type="ChEBI" id="CHEBI:456216"/>
        <dbReference type="EC" id="2.7.11.1"/>
    </reaction>
</comment>
<comment type="catalytic activity">
    <reaction evidence="7">
        <text>L-threonyl-[protein] + ATP = O-phospho-L-threonyl-[protein] + ADP + H(+)</text>
        <dbReference type="Rhea" id="RHEA:46608"/>
        <dbReference type="Rhea" id="RHEA-COMP:11060"/>
        <dbReference type="Rhea" id="RHEA-COMP:11605"/>
        <dbReference type="ChEBI" id="CHEBI:15378"/>
        <dbReference type="ChEBI" id="CHEBI:30013"/>
        <dbReference type="ChEBI" id="CHEBI:30616"/>
        <dbReference type="ChEBI" id="CHEBI:61977"/>
        <dbReference type="ChEBI" id="CHEBI:456216"/>
        <dbReference type="EC" id="2.7.11.1"/>
    </reaction>
</comment>
<comment type="activity regulation">
    <text evidence="1">Activated by calcium. Autophosphorylation may play an important role in the regulation of the kinase activity.</text>
</comment>
<comment type="subcellular location">
    <subcellularLocation>
        <location evidence="7">Membrane</location>
        <topology evidence="7">Lipid-anchor</topology>
    </subcellularLocation>
</comment>
<comment type="domain">
    <text evidence="1">There are 3 contiguous domains conserved in the CDPK subfamily: a kinase domain, an autoinhibitory (junction) domain and a calmodulin-like domain. The autoinhibitory domain (337-367) inactivates kinase activity under calcium-free conditions.</text>
</comment>
<comment type="similarity">
    <text evidence="7">Belongs to the protein kinase superfamily. Ser/Thr protein kinase family. CDPK subfamily.</text>
</comment>
<dbReference type="EC" id="2.7.11.1" evidence="7"/>
<dbReference type="EMBL" id="AC108503">
    <property type="protein sequence ID" value="AAT58767.1"/>
    <property type="molecule type" value="Genomic_DNA"/>
</dbReference>
<dbReference type="EMBL" id="AC121361">
    <property type="protein sequence ID" value="AAT58789.1"/>
    <property type="molecule type" value="Genomic_DNA"/>
</dbReference>
<dbReference type="EMBL" id="AP008211">
    <property type="protein sequence ID" value="BAF17704.1"/>
    <property type="molecule type" value="Genomic_DNA"/>
</dbReference>
<dbReference type="EMBL" id="AP014961">
    <property type="protein sequence ID" value="BAS94455.1"/>
    <property type="molecule type" value="Genomic_DNA"/>
</dbReference>
<dbReference type="SMR" id="Q6I5I8"/>
<dbReference type="FunCoup" id="Q6I5I8">
    <property type="interactions" value="1995"/>
</dbReference>
<dbReference type="STRING" id="39947.Q6I5I8"/>
<dbReference type="iPTMnet" id="Q6I5I8"/>
<dbReference type="PaxDb" id="39947-Q6I5I8"/>
<dbReference type="EnsemblPlants" id="Os05t0467000-01">
    <property type="protein sequence ID" value="Os05t0467000-01"/>
    <property type="gene ID" value="Os05g0467000"/>
</dbReference>
<dbReference type="Gramene" id="Os05t0467000-01">
    <property type="protein sequence ID" value="Os05t0467000-01"/>
    <property type="gene ID" value="Os05g0467000"/>
</dbReference>
<dbReference type="KEGG" id="dosa:Os05g0467000"/>
<dbReference type="eggNOG" id="KOG0032">
    <property type="taxonomic scope" value="Eukaryota"/>
</dbReference>
<dbReference type="HOGENOM" id="CLU_000288_37_3_1"/>
<dbReference type="InParanoid" id="Q6I5I8"/>
<dbReference type="OMA" id="GATDIME"/>
<dbReference type="OrthoDB" id="40902at2759"/>
<dbReference type="Proteomes" id="UP000000763">
    <property type="component" value="Chromosome 5"/>
</dbReference>
<dbReference type="Proteomes" id="UP000059680">
    <property type="component" value="Chromosome 5"/>
</dbReference>
<dbReference type="ExpressionAtlas" id="Q6I5I8">
    <property type="expression patterns" value="baseline and differential"/>
</dbReference>
<dbReference type="GO" id="GO:0005737">
    <property type="term" value="C:cytoplasm"/>
    <property type="evidence" value="ECO:0000318"/>
    <property type="project" value="GO_Central"/>
</dbReference>
<dbReference type="GO" id="GO:0005634">
    <property type="term" value="C:nucleus"/>
    <property type="evidence" value="ECO:0000318"/>
    <property type="project" value="GO_Central"/>
</dbReference>
<dbReference type="GO" id="GO:0005886">
    <property type="term" value="C:plasma membrane"/>
    <property type="evidence" value="ECO:0000318"/>
    <property type="project" value="GO_Central"/>
</dbReference>
<dbReference type="GO" id="GO:0005524">
    <property type="term" value="F:ATP binding"/>
    <property type="evidence" value="ECO:0007669"/>
    <property type="project" value="UniProtKB-KW"/>
</dbReference>
<dbReference type="GO" id="GO:0005509">
    <property type="term" value="F:calcium ion binding"/>
    <property type="evidence" value="ECO:0007669"/>
    <property type="project" value="InterPro"/>
</dbReference>
<dbReference type="GO" id="GO:0009931">
    <property type="term" value="F:calcium-dependent protein serine/threonine kinase activity"/>
    <property type="evidence" value="ECO:0000318"/>
    <property type="project" value="GO_Central"/>
</dbReference>
<dbReference type="GO" id="GO:0004683">
    <property type="term" value="F:calcium/calmodulin-dependent protein kinase activity"/>
    <property type="evidence" value="ECO:0000318"/>
    <property type="project" value="GO_Central"/>
</dbReference>
<dbReference type="GO" id="GO:0005516">
    <property type="term" value="F:calmodulin binding"/>
    <property type="evidence" value="ECO:0000318"/>
    <property type="project" value="GO_Central"/>
</dbReference>
<dbReference type="GO" id="GO:0106310">
    <property type="term" value="F:protein serine kinase activity"/>
    <property type="evidence" value="ECO:0007669"/>
    <property type="project" value="RHEA"/>
</dbReference>
<dbReference type="GO" id="GO:0035556">
    <property type="term" value="P:intracellular signal transduction"/>
    <property type="evidence" value="ECO:0000318"/>
    <property type="project" value="GO_Central"/>
</dbReference>
<dbReference type="CDD" id="cd00051">
    <property type="entry name" value="EFh"/>
    <property type="match status" value="1"/>
</dbReference>
<dbReference type="CDD" id="cd05117">
    <property type="entry name" value="STKc_CAMK"/>
    <property type="match status" value="1"/>
</dbReference>
<dbReference type="FunFam" id="3.30.200.20:FF:000004">
    <property type="entry name" value="Calcium-dependent protein kinase 1"/>
    <property type="match status" value="1"/>
</dbReference>
<dbReference type="FunFam" id="1.10.510.10:FF:000067">
    <property type="entry name" value="calcium-dependent protein kinase 13"/>
    <property type="match status" value="1"/>
</dbReference>
<dbReference type="FunFam" id="1.10.238.10:FF:000050">
    <property type="entry name" value="Calcium-dependent protein kinase 7"/>
    <property type="match status" value="1"/>
</dbReference>
<dbReference type="Gene3D" id="1.10.238.10">
    <property type="entry name" value="EF-hand"/>
    <property type="match status" value="1"/>
</dbReference>
<dbReference type="Gene3D" id="3.30.200.20">
    <property type="entry name" value="Phosphorylase Kinase, domain 1"/>
    <property type="match status" value="1"/>
</dbReference>
<dbReference type="Gene3D" id="1.10.510.10">
    <property type="entry name" value="Transferase(Phosphotransferase) domain 1"/>
    <property type="match status" value="1"/>
</dbReference>
<dbReference type="InterPro" id="IPR050205">
    <property type="entry name" value="CDPK_Ser/Thr_kinases"/>
</dbReference>
<dbReference type="InterPro" id="IPR011992">
    <property type="entry name" value="EF-hand-dom_pair"/>
</dbReference>
<dbReference type="InterPro" id="IPR018247">
    <property type="entry name" value="EF_Hand_1_Ca_BS"/>
</dbReference>
<dbReference type="InterPro" id="IPR002048">
    <property type="entry name" value="EF_hand_dom"/>
</dbReference>
<dbReference type="InterPro" id="IPR011009">
    <property type="entry name" value="Kinase-like_dom_sf"/>
</dbReference>
<dbReference type="InterPro" id="IPR000719">
    <property type="entry name" value="Prot_kinase_dom"/>
</dbReference>
<dbReference type="InterPro" id="IPR017441">
    <property type="entry name" value="Protein_kinase_ATP_BS"/>
</dbReference>
<dbReference type="InterPro" id="IPR008271">
    <property type="entry name" value="Ser/Thr_kinase_AS"/>
</dbReference>
<dbReference type="PANTHER" id="PTHR24349">
    <property type="entry name" value="SERINE/THREONINE-PROTEIN KINASE"/>
    <property type="match status" value="1"/>
</dbReference>
<dbReference type="Pfam" id="PF13499">
    <property type="entry name" value="EF-hand_7"/>
    <property type="match status" value="2"/>
</dbReference>
<dbReference type="Pfam" id="PF00069">
    <property type="entry name" value="Pkinase"/>
    <property type="match status" value="1"/>
</dbReference>
<dbReference type="SMART" id="SM00054">
    <property type="entry name" value="EFh"/>
    <property type="match status" value="4"/>
</dbReference>
<dbReference type="SMART" id="SM00220">
    <property type="entry name" value="S_TKc"/>
    <property type="match status" value="1"/>
</dbReference>
<dbReference type="SUPFAM" id="SSF47473">
    <property type="entry name" value="EF-hand"/>
    <property type="match status" value="1"/>
</dbReference>
<dbReference type="SUPFAM" id="SSF56112">
    <property type="entry name" value="Protein kinase-like (PK-like)"/>
    <property type="match status" value="1"/>
</dbReference>
<dbReference type="PROSITE" id="PS00018">
    <property type="entry name" value="EF_HAND_1"/>
    <property type="match status" value="3"/>
</dbReference>
<dbReference type="PROSITE" id="PS50222">
    <property type="entry name" value="EF_HAND_2"/>
    <property type="match status" value="4"/>
</dbReference>
<dbReference type="PROSITE" id="PS00107">
    <property type="entry name" value="PROTEIN_KINASE_ATP"/>
    <property type="match status" value="1"/>
</dbReference>
<dbReference type="PROSITE" id="PS50011">
    <property type="entry name" value="PROTEIN_KINASE_DOM"/>
    <property type="match status" value="1"/>
</dbReference>
<dbReference type="PROSITE" id="PS00108">
    <property type="entry name" value="PROTEIN_KINASE_ST"/>
    <property type="match status" value="1"/>
</dbReference>
<keyword id="KW-0067">ATP-binding</keyword>
<keyword id="KW-0106">Calcium</keyword>
<keyword id="KW-0418">Kinase</keyword>
<keyword id="KW-0449">Lipoprotein</keyword>
<keyword id="KW-0472">Membrane</keyword>
<keyword id="KW-0479">Metal-binding</keyword>
<keyword id="KW-0519">Myristate</keyword>
<keyword id="KW-0547">Nucleotide-binding</keyword>
<keyword id="KW-1185">Reference proteome</keyword>
<keyword id="KW-0677">Repeat</keyword>
<keyword id="KW-0723">Serine/threonine-protein kinase</keyword>
<keyword id="KW-0808">Transferase</keyword>
<feature type="initiator methionine" description="Removed" evidence="2">
    <location>
        <position position="1"/>
    </location>
</feature>
<feature type="chain" id="PRO_0000437560" description="Calcium-dependent protein kinase 16">
    <location>
        <begin position="2"/>
        <end position="547"/>
    </location>
</feature>
<feature type="domain" description="Protein kinase" evidence="3">
    <location>
        <begin position="73"/>
        <end position="331"/>
    </location>
</feature>
<feature type="domain" description="EF-hand 1" evidence="4">
    <location>
        <begin position="374"/>
        <end position="409"/>
    </location>
</feature>
<feature type="domain" description="EF-hand 2" evidence="4">
    <location>
        <begin position="410"/>
        <end position="445"/>
    </location>
</feature>
<feature type="domain" description="EF-hand 3" evidence="4">
    <location>
        <begin position="446"/>
        <end position="481"/>
    </location>
</feature>
<feature type="domain" description="EF-hand 4" evidence="4">
    <location>
        <begin position="482"/>
        <end position="517"/>
    </location>
</feature>
<feature type="region of interest" description="Disordered" evidence="5">
    <location>
        <begin position="1"/>
        <end position="53"/>
    </location>
</feature>
<feature type="region of interest" description="Autoinhibitory domain" evidence="1">
    <location>
        <begin position="337"/>
        <end position="367"/>
    </location>
</feature>
<feature type="compositionally biased region" description="Gly residues" evidence="5">
    <location>
        <begin position="37"/>
        <end position="49"/>
    </location>
</feature>
<feature type="active site" description="Proton acceptor" evidence="3">
    <location>
        <position position="197"/>
    </location>
</feature>
<feature type="binding site" evidence="3">
    <location>
        <begin position="79"/>
        <end position="87"/>
    </location>
    <ligand>
        <name>ATP</name>
        <dbReference type="ChEBI" id="CHEBI:30616"/>
    </ligand>
</feature>
<feature type="binding site" evidence="3">
    <location>
        <position position="102"/>
    </location>
    <ligand>
        <name>ATP</name>
        <dbReference type="ChEBI" id="CHEBI:30616"/>
    </ligand>
</feature>
<feature type="binding site" evidence="4">
    <location>
        <position position="387"/>
    </location>
    <ligand>
        <name>Ca(2+)</name>
        <dbReference type="ChEBI" id="CHEBI:29108"/>
        <label>1</label>
    </ligand>
</feature>
<feature type="binding site" evidence="4">
    <location>
        <position position="389"/>
    </location>
    <ligand>
        <name>Ca(2+)</name>
        <dbReference type="ChEBI" id="CHEBI:29108"/>
        <label>1</label>
    </ligand>
</feature>
<feature type="binding site" evidence="4">
    <location>
        <position position="391"/>
    </location>
    <ligand>
        <name>Ca(2+)</name>
        <dbReference type="ChEBI" id="CHEBI:29108"/>
        <label>1</label>
    </ligand>
</feature>
<feature type="binding site" evidence="4">
    <location>
        <position position="398"/>
    </location>
    <ligand>
        <name>Ca(2+)</name>
        <dbReference type="ChEBI" id="CHEBI:29108"/>
        <label>1</label>
    </ligand>
</feature>
<feature type="binding site" evidence="7">
    <location>
        <position position="423"/>
    </location>
    <ligand>
        <name>Ca(2+)</name>
        <dbReference type="ChEBI" id="CHEBI:29108"/>
        <label>2</label>
    </ligand>
</feature>
<feature type="binding site" evidence="7">
    <location>
        <position position="425"/>
    </location>
    <ligand>
        <name>Ca(2+)</name>
        <dbReference type="ChEBI" id="CHEBI:29108"/>
        <label>2</label>
    </ligand>
</feature>
<feature type="binding site" evidence="7">
    <location>
        <position position="434"/>
    </location>
    <ligand>
        <name>Ca(2+)</name>
        <dbReference type="ChEBI" id="CHEBI:29108"/>
        <label>2</label>
    </ligand>
</feature>
<feature type="binding site" evidence="4">
    <location>
        <position position="459"/>
    </location>
    <ligand>
        <name>Ca(2+)</name>
        <dbReference type="ChEBI" id="CHEBI:29108"/>
        <label>3</label>
    </ligand>
</feature>
<feature type="binding site" evidence="4">
    <location>
        <position position="461"/>
    </location>
    <ligand>
        <name>Ca(2+)</name>
        <dbReference type="ChEBI" id="CHEBI:29108"/>
        <label>3</label>
    </ligand>
</feature>
<feature type="binding site" evidence="4">
    <location>
        <position position="463"/>
    </location>
    <ligand>
        <name>Ca(2+)</name>
        <dbReference type="ChEBI" id="CHEBI:29108"/>
        <label>3</label>
    </ligand>
</feature>
<feature type="binding site" evidence="4">
    <location>
        <position position="465"/>
    </location>
    <ligand>
        <name>Ca(2+)</name>
        <dbReference type="ChEBI" id="CHEBI:29108"/>
        <label>3</label>
    </ligand>
</feature>
<feature type="binding site" evidence="4">
    <location>
        <position position="470"/>
    </location>
    <ligand>
        <name>Ca(2+)</name>
        <dbReference type="ChEBI" id="CHEBI:29108"/>
        <label>3</label>
    </ligand>
</feature>
<feature type="binding site" evidence="4">
    <location>
        <position position="495"/>
    </location>
    <ligand>
        <name>Ca(2+)</name>
        <dbReference type="ChEBI" id="CHEBI:29108"/>
        <label>4</label>
    </ligand>
</feature>
<feature type="binding site" evidence="4">
    <location>
        <position position="497"/>
    </location>
    <ligand>
        <name>Ca(2+)</name>
        <dbReference type="ChEBI" id="CHEBI:29108"/>
        <label>4</label>
    </ligand>
</feature>
<feature type="binding site" evidence="4">
    <location>
        <position position="499"/>
    </location>
    <ligand>
        <name>Ca(2+)</name>
        <dbReference type="ChEBI" id="CHEBI:29108"/>
        <label>4</label>
    </ligand>
</feature>
<feature type="binding site" evidence="4">
    <location>
        <position position="501"/>
    </location>
    <ligand>
        <name>Ca(2+)</name>
        <dbReference type="ChEBI" id="CHEBI:29108"/>
        <label>4</label>
    </ligand>
</feature>
<feature type="binding site" evidence="4">
    <location>
        <position position="506"/>
    </location>
    <ligand>
        <name>Ca(2+)</name>
        <dbReference type="ChEBI" id="CHEBI:29108"/>
        <label>4</label>
    </ligand>
</feature>
<feature type="lipid moiety-binding region" description="N-myristoyl glycine" evidence="2">
    <location>
        <position position="2"/>
    </location>
</feature>
<protein>
    <recommendedName>
        <fullName evidence="7">Calcium-dependent protein kinase 16</fullName>
        <shortName evidence="7">OsCDPK16</shortName>
        <shortName evidence="6">OsCPK16</shortName>
        <ecNumber evidence="7">2.7.11.1</ecNumber>
    </recommendedName>
</protein>
<gene>
    <name evidence="6" type="primary">CPK16</name>
    <name evidence="10" type="ordered locus">Os05g0467000</name>
    <name type="ordered locus">LOC_Os05g39090</name>
    <name evidence="8" type="ORF">OJ1387_F08.13</name>
    <name evidence="9" type="ORF">OSJNBa0009E21.17</name>
</gene>
<evidence type="ECO:0000250" key="1">
    <source>
        <dbReference type="UniProtKB" id="Q06850"/>
    </source>
</evidence>
<evidence type="ECO:0000255" key="2"/>
<evidence type="ECO:0000255" key="3">
    <source>
        <dbReference type="PROSITE-ProRule" id="PRU00159"/>
    </source>
</evidence>
<evidence type="ECO:0000255" key="4">
    <source>
        <dbReference type="PROSITE-ProRule" id="PRU00448"/>
    </source>
</evidence>
<evidence type="ECO:0000256" key="5">
    <source>
        <dbReference type="SAM" id="MobiDB-lite"/>
    </source>
</evidence>
<evidence type="ECO:0000303" key="6">
    <source>
    </source>
</evidence>
<evidence type="ECO:0000305" key="7"/>
<evidence type="ECO:0000312" key="8">
    <source>
        <dbReference type="EMBL" id="AAT58767.1"/>
    </source>
</evidence>
<evidence type="ECO:0000312" key="9">
    <source>
        <dbReference type="EMBL" id="AAT58789.1"/>
    </source>
</evidence>
<evidence type="ECO:0000312" key="10">
    <source>
        <dbReference type="EMBL" id="BAF17704.1"/>
    </source>
</evidence>
<accession>Q6I5I8</accession>
<reference key="1">
    <citation type="journal article" date="2005" name="Mol. Genet. Genomics">
        <title>A fine physical map of the rice chromosome 5.</title>
        <authorList>
            <person name="Cheng C.-H."/>
            <person name="Chung M.C."/>
            <person name="Liu S.-M."/>
            <person name="Chen S.-K."/>
            <person name="Kao F.Y."/>
            <person name="Lin S.-J."/>
            <person name="Hsiao S.-H."/>
            <person name="Tseng I.C."/>
            <person name="Hsing Y.-I.C."/>
            <person name="Wu H.-P."/>
            <person name="Chen C.-S."/>
            <person name="Shaw J.-F."/>
            <person name="Wu J."/>
            <person name="Matsumoto T."/>
            <person name="Sasaki T."/>
            <person name="Chen H.-C."/>
            <person name="Chow T.-Y."/>
        </authorList>
    </citation>
    <scope>NUCLEOTIDE SEQUENCE [LARGE SCALE GENOMIC DNA]</scope>
    <source>
        <strain>cv. Nipponbare</strain>
    </source>
</reference>
<reference key="2">
    <citation type="journal article" date="2005" name="Nature">
        <title>The map-based sequence of the rice genome.</title>
        <authorList>
            <consortium name="International rice genome sequencing project (IRGSP)"/>
        </authorList>
    </citation>
    <scope>NUCLEOTIDE SEQUENCE [LARGE SCALE GENOMIC DNA]</scope>
    <source>
        <strain>cv. Nipponbare</strain>
    </source>
</reference>
<reference key="3">
    <citation type="journal article" date="2008" name="Nucleic Acids Res.">
        <title>The rice annotation project database (RAP-DB): 2008 update.</title>
        <authorList>
            <consortium name="The rice annotation project (RAP)"/>
        </authorList>
    </citation>
    <scope>GENOME REANNOTATION</scope>
    <source>
        <strain>cv. Nipponbare</strain>
    </source>
</reference>
<reference key="4">
    <citation type="journal article" date="2013" name="Rice">
        <title>Improvement of the Oryza sativa Nipponbare reference genome using next generation sequence and optical map data.</title>
        <authorList>
            <person name="Kawahara Y."/>
            <person name="de la Bastide M."/>
            <person name="Hamilton J.P."/>
            <person name="Kanamori H."/>
            <person name="McCombie W.R."/>
            <person name="Ouyang S."/>
            <person name="Schwartz D.C."/>
            <person name="Tanaka T."/>
            <person name="Wu J."/>
            <person name="Zhou S."/>
            <person name="Childs K.L."/>
            <person name="Davidson R.M."/>
            <person name="Lin H."/>
            <person name="Quesada-Ocampo L."/>
            <person name="Vaillancourt B."/>
            <person name="Sakai H."/>
            <person name="Lee S.S."/>
            <person name="Kim J."/>
            <person name="Numa H."/>
            <person name="Itoh T."/>
            <person name="Buell C.R."/>
            <person name="Matsumoto T."/>
        </authorList>
    </citation>
    <scope>GENOME REANNOTATION</scope>
    <source>
        <strain>cv. Nipponbare</strain>
    </source>
</reference>
<reference key="5">
    <citation type="journal article" date="2005" name="Plant Cell Physiol.">
        <title>Genome-wide identification of the rice calcium-dependent protein kinase and its closely related kinase gene families: comprehensive analysis of the CDPKs gene family in rice.</title>
        <authorList>
            <person name="Asano T."/>
            <person name="Tanaka N."/>
            <person name="Yang G."/>
            <person name="Hayashi N."/>
            <person name="Komatsu S."/>
        </authorList>
    </citation>
    <scope>GENE FAMILY</scope>
    <scope>NOMENCLATURE</scope>
</reference>
<name>CDPKG_ORYSJ</name>
<proteinExistence type="inferred from homology"/>
<sequence>MGNCCRSPAAAAREDVKTSHFPASTGGGKKKPHQARNGGGGGGGGGGGGWEKKRLSVLGEEGSEVNGGIEEKYALDRELGRGEFGVTYLCMDRCSRELLACKSISKRKLRTPVDVEDVRREVAIMRHLPRSASIVSLREACEDDGAVHLVMELCEGGELFDRIVARGHYTERAAAAVTRTIVEVVQLCHRHGVIHRDLKPENFLFANKKENSPLKAIDFGLSIFFKPGEKFSEIVGSPYYMAPEVLKRNYGPEIDIWSAGVILYILLCGVPPFWAETEQGVAQAILRGNIDFKREPWPNVSDNAKDLVRQMLQPDPKLRLTAKQVLEHTWLQNAKKAPNVPLGDIVKSRLKQFSRMNRFKRRALRVIADHLSAEEVEDIKDMFKVMDTDNDGIVSYEELKSGIAKFGSHLAESEVQMLIEAVDTNGRGALDYGEFLAVSLHLQRMANGEHLRRAFLFFDKDGNGYIEPEELQEALVEDGATDIMEVVKDILQEVDTDKDGKISYEEFVAMMKTGTDWRKASRHYSRGRFNSLSIRLIKDGSVKLGNE</sequence>
<organism evidence="9">
    <name type="scientific">Oryza sativa subsp. japonica</name>
    <name type="common">Rice</name>
    <dbReference type="NCBI Taxonomy" id="39947"/>
    <lineage>
        <taxon>Eukaryota</taxon>
        <taxon>Viridiplantae</taxon>
        <taxon>Streptophyta</taxon>
        <taxon>Embryophyta</taxon>
        <taxon>Tracheophyta</taxon>
        <taxon>Spermatophyta</taxon>
        <taxon>Magnoliopsida</taxon>
        <taxon>Liliopsida</taxon>
        <taxon>Poales</taxon>
        <taxon>Poaceae</taxon>
        <taxon>BOP clade</taxon>
        <taxon>Oryzoideae</taxon>
        <taxon>Oryzeae</taxon>
        <taxon>Oryzinae</taxon>
        <taxon>Oryza</taxon>
        <taxon>Oryza sativa</taxon>
    </lineage>
</organism>